<keyword id="KW-0143">Chaperone</keyword>
<keyword id="KW-0963">Cytoplasm</keyword>
<keyword id="KW-1185">Reference proteome</keyword>
<proteinExistence type="inferred from homology"/>
<accession>Q5WJN5</accession>
<sequence>MLKPLGDRIIIEQIQSEEKTASGIVLPDSAKEKPQEGKVVAVGTGRVTDNGEKVALEVKEGDSIIFSKYAGTEVKYEGTEYLILRESDVLAIIG</sequence>
<evidence type="ECO:0000255" key="1">
    <source>
        <dbReference type="HAMAP-Rule" id="MF_00580"/>
    </source>
</evidence>
<gene>
    <name evidence="1" type="primary">groES</name>
    <name evidence="1" type="synonym">groS</name>
    <name type="ordered locus">ABC0881</name>
</gene>
<protein>
    <recommendedName>
        <fullName evidence="1">Co-chaperonin GroES</fullName>
    </recommendedName>
    <alternativeName>
        <fullName evidence="1">10 kDa chaperonin</fullName>
    </alternativeName>
    <alternativeName>
        <fullName evidence="1">Chaperonin-10</fullName>
        <shortName evidence="1">Cpn10</shortName>
    </alternativeName>
</protein>
<comment type="function">
    <text evidence="1">Together with the chaperonin GroEL, plays an essential role in assisting protein folding. The GroEL-GroES system forms a nano-cage that allows encapsulation of the non-native substrate proteins and provides a physical environment optimized to promote and accelerate protein folding. GroES binds to the apical surface of the GroEL ring, thereby capping the opening of the GroEL channel.</text>
</comment>
<comment type="subunit">
    <text evidence="1">Heptamer of 7 subunits arranged in a ring. Interacts with the chaperonin GroEL.</text>
</comment>
<comment type="subcellular location">
    <subcellularLocation>
        <location evidence="1">Cytoplasm</location>
    </subcellularLocation>
</comment>
<comment type="similarity">
    <text evidence="1">Belongs to the GroES chaperonin family.</text>
</comment>
<reference key="1">
    <citation type="submission" date="2003-10" db="EMBL/GenBank/DDBJ databases">
        <title>The complete genome sequence of the alkaliphilic Bacillus clausii KSM-K16.</title>
        <authorList>
            <person name="Takaki Y."/>
            <person name="Kageyama Y."/>
            <person name="Shimamura S."/>
            <person name="Suzuki H."/>
            <person name="Nishi S."/>
            <person name="Hatada Y."/>
            <person name="Kawai S."/>
            <person name="Ito S."/>
            <person name="Horikoshi K."/>
        </authorList>
    </citation>
    <scope>NUCLEOTIDE SEQUENCE [LARGE SCALE GENOMIC DNA]</scope>
    <source>
        <strain>KSM-K16</strain>
    </source>
</reference>
<name>CH10_SHOC1</name>
<organism>
    <name type="scientific">Shouchella clausii (strain KSM-K16)</name>
    <name type="common">Alkalihalobacillus clausii</name>
    <dbReference type="NCBI Taxonomy" id="66692"/>
    <lineage>
        <taxon>Bacteria</taxon>
        <taxon>Bacillati</taxon>
        <taxon>Bacillota</taxon>
        <taxon>Bacilli</taxon>
        <taxon>Bacillales</taxon>
        <taxon>Bacillaceae</taxon>
        <taxon>Shouchella</taxon>
    </lineage>
</organism>
<feature type="chain" id="PRO_0000174696" description="Co-chaperonin GroES">
    <location>
        <begin position="1"/>
        <end position="94"/>
    </location>
</feature>
<dbReference type="EMBL" id="AP006627">
    <property type="protein sequence ID" value="BAD63420.1"/>
    <property type="molecule type" value="Genomic_DNA"/>
</dbReference>
<dbReference type="RefSeq" id="WP_011245736.1">
    <property type="nucleotide sequence ID" value="NC_006582.1"/>
</dbReference>
<dbReference type="SMR" id="Q5WJN5"/>
<dbReference type="STRING" id="66692.ABC0881"/>
<dbReference type="GeneID" id="86924969"/>
<dbReference type="KEGG" id="bcl:ABC0881"/>
<dbReference type="eggNOG" id="COG0234">
    <property type="taxonomic scope" value="Bacteria"/>
</dbReference>
<dbReference type="HOGENOM" id="CLU_132825_2_0_9"/>
<dbReference type="OrthoDB" id="9806791at2"/>
<dbReference type="Proteomes" id="UP000001168">
    <property type="component" value="Chromosome"/>
</dbReference>
<dbReference type="GO" id="GO:0005737">
    <property type="term" value="C:cytoplasm"/>
    <property type="evidence" value="ECO:0007669"/>
    <property type="project" value="UniProtKB-SubCell"/>
</dbReference>
<dbReference type="GO" id="GO:0005524">
    <property type="term" value="F:ATP binding"/>
    <property type="evidence" value="ECO:0007669"/>
    <property type="project" value="InterPro"/>
</dbReference>
<dbReference type="GO" id="GO:0046872">
    <property type="term" value="F:metal ion binding"/>
    <property type="evidence" value="ECO:0007669"/>
    <property type="project" value="TreeGrafter"/>
</dbReference>
<dbReference type="GO" id="GO:0044183">
    <property type="term" value="F:protein folding chaperone"/>
    <property type="evidence" value="ECO:0007669"/>
    <property type="project" value="InterPro"/>
</dbReference>
<dbReference type="GO" id="GO:0051087">
    <property type="term" value="F:protein-folding chaperone binding"/>
    <property type="evidence" value="ECO:0007669"/>
    <property type="project" value="TreeGrafter"/>
</dbReference>
<dbReference type="GO" id="GO:0051082">
    <property type="term" value="F:unfolded protein binding"/>
    <property type="evidence" value="ECO:0007669"/>
    <property type="project" value="TreeGrafter"/>
</dbReference>
<dbReference type="GO" id="GO:0051085">
    <property type="term" value="P:chaperone cofactor-dependent protein refolding"/>
    <property type="evidence" value="ECO:0007669"/>
    <property type="project" value="TreeGrafter"/>
</dbReference>
<dbReference type="CDD" id="cd00320">
    <property type="entry name" value="cpn10"/>
    <property type="match status" value="1"/>
</dbReference>
<dbReference type="FunFam" id="2.30.33.40:FF:000001">
    <property type="entry name" value="10 kDa chaperonin"/>
    <property type="match status" value="1"/>
</dbReference>
<dbReference type="Gene3D" id="2.30.33.40">
    <property type="entry name" value="GroES chaperonin"/>
    <property type="match status" value="1"/>
</dbReference>
<dbReference type="HAMAP" id="MF_00580">
    <property type="entry name" value="CH10"/>
    <property type="match status" value="1"/>
</dbReference>
<dbReference type="InterPro" id="IPR020818">
    <property type="entry name" value="Chaperonin_GroES"/>
</dbReference>
<dbReference type="InterPro" id="IPR037124">
    <property type="entry name" value="Chaperonin_GroES_sf"/>
</dbReference>
<dbReference type="InterPro" id="IPR018369">
    <property type="entry name" value="Chaprnonin_Cpn10_CS"/>
</dbReference>
<dbReference type="InterPro" id="IPR011032">
    <property type="entry name" value="GroES-like_sf"/>
</dbReference>
<dbReference type="NCBIfam" id="NF001527">
    <property type="entry name" value="PRK00364.1-2"/>
    <property type="match status" value="1"/>
</dbReference>
<dbReference type="NCBIfam" id="NF001530">
    <property type="entry name" value="PRK00364.1-6"/>
    <property type="match status" value="1"/>
</dbReference>
<dbReference type="NCBIfam" id="NF001531">
    <property type="entry name" value="PRK00364.2-2"/>
    <property type="match status" value="1"/>
</dbReference>
<dbReference type="NCBIfam" id="NF001532">
    <property type="entry name" value="PRK00364.2-3"/>
    <property type="match status" value="1"/>
</dbReference>
<dbReference type="NCBIfam" id="NF001533">
    <property type="entry name" value="PRK00364.2-4"/>
    <property type="match status" value="1"/>
</dbReference>
<dbReference type="NCBIfam" id="NF001534">
    <property type="entry name" value="PRK00364.2-5"/>
    <property type="match status" value="1"/>
</dbReference>
<dbReference type="PANTHER" id="PTHR10772">
    <property type="entry name" value="10 KDA HEAT SHOCK PROTEIN"/>
    <property type="match status" value="1"/>
</dbReference>
<dbReference type="PANTHER" id="PTHR10772:SF58">
    <property type="entry name" value="CO-CHAPERONIN GROES"/>
    <property type="match status" value="1"/>
</dbReference>
<dbReference type="Pfam" id="PF00166">
    <property type="entry name" value="Cpn10"/>
    <property type="match status" value="1"/>
</dbReference>
<dbReference type="PRINTS" id="PR00297">
    <property type="entry name" value="CHAPERONIN10"/>
</dbReference>
<dbReference type="SMART" id="SM00883">
    <property type="entry name" value="Cpn10"/>
    <property type="match status" value="1"/>
</dbReference>
<dbReference type="SUPFAM" id="SSF50129">
    <property type="entry name" value="GroES-like"/>
    <property type="match status" value="1"/>
</dbReference>
<dbReference type="PROSITE" id="PS00681">
    <property type="entry name" value="CHAPERONINS_CPN10"/>
    <property type="match status" value="1"/>
</dbReference>